<sequence>MKDLTHVDEKGVKMVEVGHKDVVFRKAVAKGRIRLKPETIELIKAGKTKKGNVIAAAQIAGILAVKKTPELIPLCHPIPLTGVDITFEFGDDYIEATCEVRAYYKTGVEMEALTGVSVALLTIWDMVKAVEKDENGQYPFTRIEDIRVVEKVKGEE</sequence>
<organism>
    <name type="scientific">Thermococcus kodakarensis (strain ATCC BAA-918 / JCM 12380 / KOD1)</name>
    <name type="common">Pyrococcus kodakaraensis (strain KOD1)</name>
    <dbReference type="NCBI Taxonomy" id="69014"/>
    <lineage>
        <taxon>Archaea</taxon>
        <taxon>Methanobacteriati</taxon>
        <taxon>Methanobacteriota</taxon>
        <taxon>Thermococci</taxon>
        <taxon>Thermococcales</taxon>
        <taxon>Thermococcaceae</taxon>
        <taxon>Thermococcus</taxon>
    </lineage>
</organism>
<protein>
    <recommendedName>
        <fullName evidence="1">Probable cyclic pyranopterin monophosphate synthase</fullName>
        <ecNumber evidence="1">4.6.1.17</ecNumber>
    </recommendedName>
    <alternativeName>
        <fullName evidence="1">Molybdenum cofactor biosynthesis protein C</fullName>
    </alternativeName>
</protein>
<reference key="1">
    <citation type="journal article" date="2005" name="Genome Res.">
        <title>Complete genome sequence of the hyperthermophilic archaeon Thermococcus kodakaraensis KOD1 and comparison with Pyrococcus genomes.</title>
        <authorList>
            <person name="Fukui T."/>
            <person name="Atomi H."/>
            <person name="Kanai T."/>
            <person name="Matsumi R."/>
            <person name="Fujiwara S."/>
            <person name="Imanaka T."/>
        </authorList>
    </citation>
    <scope>NUCLEOTIDE SEQUENCE [LARGE SCALE GENOMIC DNA]</scope>
    <source>
        <strain>ATCC BAA-918 / JCM 12380 / KOD1</strain>
    </source>
</reference>
<accession>Q5JCX1</accession>
<name>MOAC_THEKO</name>
<feature type="chain" id="PRO_0000097862" description="Probable cyclic pyranopterin monophosphate synthase">
    <location>
        <begin position="1"/>
        <end position="156"/>
    </location>
</feature>
<feature type="active site" evidence="1">
    <location>
        <position position="125"/>
    </location>
</feature>
<feature type="binding site" evidence="1">
    <location>
        <begin position="74"/>
        <end position="76"/>
    </location>
    <ligand>
        <name>substrate</name>
    </ligand>
</feature>
<feature type="binding site" evidence="1">
    <location>
        <begin position="110"/>
        <end position="111"/>
    </location>
    <ligand>
        <name>substrate</name>
    </ligand>
</feature>
<evidence type="ECO:0000255" key="1">
    <source>
        <dbReference type="HAMAP-Rule" id="MF_01224"/>
    </source>
</evidence>
<proteinExistence type="inferred from homology"/>
<comment type="function">
    <text evidence="1">Catalyzes the conversion of (8S)-3',8-cyclo-7,8-dihydroguanosine 5'-triphosphate to cyclic pyranopterin monophosphate (cPMP).</text>
</comment>
<comment type="catalytic activity">
    <reaction evidence="1">
        <text>(8S)-3',8-cyclo-7,8-dihydroguanosine 5'-triphosphate = cyclic pyranopterin phosphate + diphosphate</text>
        <dbReference type="Rhea" id="RHEA:49580"/>
        <dbReference type="ChEBI" id="CHEBI:33019"/>
        <dbReference type="ChEBI" id="CHEBI:59648"/>
        <dbReference type="ChEBI" id="CHEBI:131766"/>
        <dbReference type="EC" id="4.6.1.17"/>
    </reaction>
</comment>
<comment type="pathway">
    <text evidence="1">Cofactor biosynthesis; molybdopterin biosynthesis.</text>
</comment>
<comment type="subunit">
    <text evidence="1">Homohexamer; trimer of dimers.</text>
</comment>
<comment type="similarity">
    <text evidence="1">Belongs to the MoaC family.</text>
</comment>
<gene>
    <name evidence="1" type="primary">moaC</name>
    <name type="ordered locus">TK0354</name>
</gene>
<keyword id="KW-0456">Lyase</keyword>
<keyword id="KW-0501">Molybdenum cofactor biosynthesis</keyword>
<keyword id="KW-1185">Reference proteome</keyword>
<dbReference type="EC" id="4.6.1.17" evidence="1"/>
<dbReference type="EMBL" id="AP006878">
    <property type="protein sequence ID" value="BAD84543.1"/>
    <property type="molecule type" value="Genomic_DNA"/>
</dbReference>
<dbReference type="RefSeq" id="WP_011249309.1">
    <property type="nucleotide sequence ID" value="NC_006624.1"/>
</dbReference>
<dbReference type="SMR" id="Q5JCX1"/>
<dbReference type="FunCoup" id="Q5JCX1">
    <property type="interactions" value="58"/>
</dbReference>
<dbReference type="IntAct" id="Q5JCX1">
    <property type="interactions" value="1"/>
</dbReference>
<dbReference type="MINT" id="Q5JCX1"/>
<dbReference type="STRING" id="69014.TK0354"/>
<dbReference type="EnsemblBacteria" id="BAD84543">
    <property type="protein sequence ID" value="BAD84543"/>
    <property type="gene ID" value="TK0354"/>
</dbReference>
<dbReference type="GeneID" id="78446859"/>
<dbReference type="KEGG" id="tko:TK0354"/>
<dbReference type="PATRIC" id="fig|69014.16.peg.351"/>
<dbReference type="eggNOG" id="arCOG01530">
    <property type="taxonomic scope" value="Archaea"/>
</dbReference>
<dbReference type="HOGENOM" id="CLU_074693_1_2_2"/>
<dbReference type="InParanoid" id="Q5JCX1"/>
<dbReference type="OrthoDB" id="10067at2157"/>
<dbReference type="PhylomeDB" id="Q5JCX1"/>
<dbReference type="UniPathway" id="UPA00344"/>
<dbReference type="Proteomes" id="UP000000536">
    <property type="component" value="Chromosome"/>
</dbReference>
<dbReference type="GO" id="GO:0061799">
    <property type="term" value="F:cyclic pyranopterin monophosphate synthase activity"/>
    <property type="evidence" value="ECO:0007669"/>
    <property type="project" value="UniProtKB-UniRule"/>
</dbReference>
<dbReference type="GO" id="GO:0006777">
    <property type="term" value="P:Mo-molybdopterin cofactor biosynthetic process"/>
    <property type="evidence" value="ECO:0007669"/>
    <property type="project" value="UniProtKB-UniRule"/>
</dbReference>
<dbReference type="CDD" id="cd01419">
    <property type="entry name" value="MoaC_A"/>
    <property type="match status" value="1"/>
</dbReference>
<dbReference type="Gene3D" id="3.30.70.640">
    <property type="entry name" value="Molybdopterin cofactor biosynthesis C (MoaC) domain"/>
    <property type="match status" value="1"/>
</dbReference>
<dbReference type="HAMAP" id="MF_01224_A">
    <property type="entry name" value="MoaC_A"/>
    <property type="match status" value="1"/>
</dbReference>
<dbReference type="InterPro" id="IPR023047">
    <property type="entry name" value="Mo_CF_biosynth-C_arc"/>
</dbReference>
<dbReference type="InterPro" id="IPR023045">
    <property type="entry name" value="MoaC"/>
</dbReference>
<dbReference type="InterPro" id="IPR036522">
    <property type="entry name" value="MoaC_sf"/>
</dbReference>
<dbReference type="InterPro" id="IPR050105">
    <property type="entry name" value="MoCo_biosynth_MoaA/MoaC"/>
</dbReference>
<dbReference type="InterPro" id="IPR002820">
    <property type="entry name" value="Mopterin_CF_biosynth-C_dom"/>
</dbReference>
<dbReference type="NCBIfam" id="TIGR00581">
    <property type="entry name" value="moaC"/>
    <property type="match status" value="1"/>
</dbReference>
<dbReference type="NCBIfam" id="NF006870">
    <property type="entry name" value="PRK09364.1"/>
    <property type="match status" value="1"/>
</dbReference>
<dbReference type="NCBIfam" id="NF008999">
    <property type="entry name" value="PRK12343.1"/>
    <property type="match status" value="1"/>
</dbReference>
<dbReference type="PANTHER" id="PTHR22960:SF0">
    <property type="entry name" value="MOLYBDENUM COFACTOR BIOSYNTHESIS PROTEIN 1"/>
    <property type="match status" value="1"/>
</dbReference>
<dbReference type="PANTHER" id="PTHR22960">
    <property type="entry name" value="MOLYBDOPTERIN COFACTOR SYNTHESIS PROTEIN A"/>
    <property type="match status" value="1"/>
</dbReference>
<dbReference type="Pfam" id="PF01967">
    <property type="entry name" value="MoaC"/>
    <property type="match status" value="1"/>
</dbReference>
<dbReference type="SUPFAM" id="SSF55040">
    <property type="entry name" value="Molybdenum cofactor biosynthesis protein C, MoaC"/>
    <property type="match status" value="1"/>
</dbReference>